<organism>
    <name type="scientific">Shewanella oneidensis (strain ATCC 700550 / JCM 31522 / CIP 106686 / LMG 19005 / NCIMB 14063 / MR-1)</name>
    <dbReference type="NCBI Taxonomy" id="211586"/>
    <lineage>
        <taxon>Bacteria</taxon>
        <taxon>Pseudomonadati</taxon>
        <taxon>Pseudomonadota</taxon>
        <taxon>Gammaproteobacteria</taxon>
        <taxon>Alteromonadales</taxon>
        <taxon>Shewanellaceae</taxon>
        <taxon>Shewanella</taxon>
    </lineage>
</organism>
<reference key="1">
    <citation type="journal article" date="2002" name="Nat. Biotechnol.">
        <title>Genome sequence of the dissimilatory metal ion-reducing bacterium Shewanella oneidensis.</title>
        <authorList>
            <person name="Heidelberg J.F."/>
            <person name="Paulsen I.T."/>
            <person name="Nelson K.E."/>
            <person name="Gaidos E.J."/>
            <person name="Nelson W.C."/>
            <person name="Read T.D."/>
            <person name="Eisen J.A."/>
            <person name="Seshadri R."/>
            <person name="Ward N.L."/>
            <person name="Methe B.A."/>
            <person name="Clayton R.A."/>
            <person name="Meyer T."/>
            <person name="Tsapin A."/>
            <person name="Scott J."/>
            <person name="Beanan M.J."/>
            <person name="Brinkac L.M."/>
            <person name="Daugherty S.C."/>
            <person name="DeBoy R.T."/>
            <person name="Dodson R.J."/>
            <person name="Durkin A.S."/>
            <person name="Haft D.H."/>
            <person name="Kolonay J.F."/>
            <person name="Madupu R."/>
            <person name="Peterson J.D."/>
            <person name="Umayam L.A."/>
            <person name="White O."/>
            <person name="Wolf A.M."/>
            <person name="Vamathevan J.J."/>
            <person name="Weidman J.F."/>
            <person name="Impraim M."/>
            <person name="Lee K."/>
            <person name="Berry K.J."/>
            <person name="Lee C."/>
            <person name="Mueller J."/>
            <person name="Khouri H.M."/>
            <person name="Gill J."/>
            <person name="Utterback T.R."/>
            <person name="McDonald L.A."/>
            <person name="Feldblyum T.V."/>
            <person name="Smith H.O."/>
            <person name="Venter J.C."/>
            <person name="Nealson K.H."/>
            <person name="Fraser C.M."/>
        </authorList>
    </citation>
    <scope>NUCLEOTIDE SEQUENCE [LARGE SCALE GENOMIC DNA]</scope>
    <source>
        <strain>ATCC 700550 / JCM 31522 / CIP 106686 / LMG 19005 / NCIMB 14063 / MR-1</strain>
    </source>
</reference>
<protein>
    <recommendedName>
        <fullName evidence="1">Transcriptional repressor NrdR</fullName>
    </recommendedName>
</protein>
<gene>
    <name evidence="1" type="primary">nrdR</name>
    <name type="ordered locus">SO_3470</name>
</gene>
<feature type="chain" id="PRO_0000182344" description="Transcriptional repressor NrdR">
    <location>
        <begin position="1"/>
        <end position="149"/>
    </location>
</feature>
<feature type="domain" description="ATP-cone" evidence="1">
    <location>
        <begin position="49"/>
        <end position="139"/>
    </location>
</feature>
<feature type="zinc finger region" evidence="1">
    <location>
        <begin position="3"/>
        <end position="34"/>
    </location>
</feature>
<sequence>MHCPFCSATDTKVIDSRLVAEGHQVRRRRECTECHERFTTFEGAELVMPRVIKRDGTRQPFDEEKLQAGMLRAVEKRPVSMDEIEQALSKIKSTLRATGEREVPSEMIGNLMMEQLMSLDKVAYIRFASVYRAFEDVSEFGEAIAKLQK</sequence>
<comment type="function">
    <text evidence="1">Negatively regulates transcription of bacterial ribonucleotide reductase nrd genes and operons by binding to NrdR-boxes.</text>
</comment>
<comment type="cofactor">
    <cofactor evidence="1">
        <name>Zn(2+)</name>
        <dbReference type="ChEBI" id="CHEBI:29105"/>
    </cofactor>
    <text evidence="1">Binds 1 zinc ion.</text>
</comment>
<comment type="similarity">
    <text evidence="1">Belongs to the NrdR family.</text>
</comment>
<evidence type="ECO:0000255" key="1">
    <source>
        <dbReference type="HAMAP-Rule" id="MF_00440"/>
    </source>
</evidence>
<proteinExistence type="inferred from homology"/>
<dbReference type="EMBL" id="AE014299">
    <property type="protein sequence ID" value="AAN56463.1"/>
    <property type="molecule type" value="Genomic_DNA"/>
</dbReference>
<dbReference type="RefSeq" id="NP_719019.1">
    <property type="nucleotide sequence ID" value="NC_004347.2"/>
</dbReference>
<dbReference type="RefSeq" id="WP_011073317.1">
    <property type="nucleotide sequence ID" value="NZ_CP053946.1"/>
</dbReference>
<dbReference type="SMR" id="Q8EBN9"/>
<dbReference type="STRING" id="211586.SO_3470"/>
<dbReference type="PaxDb" id="211586-SO_3470"/>
<dbReference type="GeneID" id="94727094"/>
<dbReference type="KEGG" id="son:SO_3470"/>
<dbReference type="PATRIC" id="fig|211586.12.peg.3369"/>
<dbReference type="eggNOG" id="COG1327">
    <property type="taxonomic scope" value="Bacteria"/>
</dbReference>
<dbReference type="HOGENOM" id="CLU_108412_0_0_6"/>
<dbReference type="OrthoDB" id="9807461at2"/>
<dbReference type="PhylomeDB" id="Q8EBN9"/>
<dbReference type="BioCyc" id="SONE211586:G1GMP-3239-MONOMER"/>
<dbReference type="Proteomes" id="UP000008186">
    <property type="component" value="Chromosome"/>
</dbReference>
<dbReference type="GO" id="GO:0005524">
    <property type="term" value="F:ATP binding"/>
    <property type="evidence" value="ECO:0007669"/>
    <property type="project" value="UniProtKB-KW"/>
</dbReference>
<dbReference type="GO" id="GO:0003690">
    <property type="term" value="F:double-stranded DNA binding"/>
    <property type="evidence" value="ECO:0000318"/>
    <property type="project" value="GO_Central"/>
</dbReference>
<dbReference type="GO" id="GO:0008270">
    <property type="term" value="F:zinc ion binding"/>
    <property type="evidence" value="ECO:0007669"/>
    <property type="project" value="UniProtKB-UniRule"/>
</dbReference>
<dbReference type="GO" id="GO:0045892">
    <property type="term" value="P:negative regulation of DNA-templated transcription"/>
    <property type="evidence" value="ECO:0000318"/>
    <property type="project" value="GO_Central"/>
</dbReference>
<dbReference type="HAMAP" id="MF_00440">
    <property type="entry name" value="NrdR"/>
    <property type="match status" value="1"/>
</dbReference>
<dbReference type="InterPro" id="IPR005144">
    <property type="entry name" value="ATP-cone_dom"/>
</dbReference>
<dbReference type="InterPro" id="IPR055173">
    <property type="entry name" value="NrdR-like_N"/>
</dbReference>
<dbReference type="InterPro" id="IPR003796">
    <property type="entry name" value="RNR_NrdR-like"/>
</dbReference>
<dbReference type="NCBIfam" id="TIGR00244">
    <property type="entry name" value="transcriptional regulator NrdR"/>
    <property type="match status" value="1"/>
</dbReference>
<dbReference type="PANTHER" id="PTHR30455">
    <property type="entry name" value="TRANSCRIPTIONAL REPRESSOR NRDR"/>
    <property type="match status" value="1"/>
</dbReference>
<dbReference type="PANTHER" id="PTHR30455:SF2">
    <property type="entry name" value="TRANSCRIPTIONAL REPRESSOR NRDR"/>
    <property type="match status" value="1"/>
</dbReference>
<dbReference type="Pfam" id="PF03477">
    <property type="entry name" value="ATP-cone"/>
    <property type="match status" value="1"/>
</dbReference>
<dbReference type="Pfam" id="PF22811">
    <property type="entry name" value="Zn_ribbon_NrdR"/>
    <property type="match status" value="1"/>
</dbReference>
<dbReference type="PROSITE" id="PS51161">
    <property type="entry name" value="ATP_CONE"/>
    <property type="match status" value="1"/>
</dbReference>
<name>NRDR_SHEON</name>
<keyword id="KW-0067">ATP-binding</keyword>
<keyword id="KW-0238">DNA-binding</keyword>
<keyword id="KW-0479">Metal-binding</keyword>
<keyword id="KW-0547">Nucleotide-binding</keyword>
<keyword id="KW-1185">Reference proteome</keyword>
<keyword id="KW-0678">Repressor</keyword>
<keyword id="KW-0804">Transcription</keyword>
<keyword id="KW-0805">Transcription regulation</keyword>
<keyword id="KW-0862">Zinc</keyword>
<keyword id="KW-0863">Zinc-finger</keyword>
<accession>Q8EBN9</accession>